<reference key="1">
    <citation type="submission" date="2008-06" db="EMBL/GenBank/DDBJ databases">
        <title>Genome and proteome analysis of A. pleuropneumoniae serotype 7.</title>
        <authorList>
            <person name="Linke B."/>
            <person name="Buettner F."/>
            <person name="Martinez-Arias R."/>
            <person name="Goesmann A."/>
            <person name="Baltes N."/>
            <person name="Tegetmeyer H."/>
            <person name="Singh M."/>
            <person name="Gerlach G.F."/>
        </authorList>
    </citation>
    <scope>NUCLEOTIDE SEQUENCE [LARGE SCALE GENOMIC DNA]</scope>
    <source>
        <strain>AP76</strain>
    </source>
</reference>
<feature type="chain" id="PRO_1000098158" description="6,7-dimethyl-8-ribityllumazine synthase">
    <location>
        <begin position="1"/>
        <end position="153"/>
    </location>
</feature>
<feature type="active site" description="Proton donor" evidence="1">
    <location>
        <position position="88"/>
    </location>
</feature>
<feature type="binding site" evidence="1">
    <location>
        <position position="22"/>
    </location>
    <ligand>
        <name>5-amino-6-(D-ribitylamino)uracil</name>
        <dbReference type="ChEBI" id="CHEBI:15934"/>
    </ligand>
</feature>
<feature type="binding site" evidence="1">
    <location>
        <begin position="56"/>
        <end position="58"/>
    </location>
    <ligand>
        <name>5-amino-6-(D-ribitylamino)uracil</name>
        <dbReference type="ChEBI" id="CHEBI:15934"/>
    </ligand>
</feature>
<feature type="binding site" evidence="1">
    <location>
        <begin position="80"/>
        <end position="82"/>
    </location>
    <ligand>
        <name>5-amino-6-(D-ribitylamino)uracil</name>
        <dbReference type="ChEBI" id="CHEBI:15934"/>
    </ligand>
</feature>
<feature type="binding site" evidence="1">
    <location>
        <begin position="85"/>
        <end position="86"/>
    </location>
    <ligand>
        <name>(2S)-2-hydroxy-3-oxobutyl phosphate</name>
        <dbReference type="ChEBI" id="CHEBI:58830"/>
    </ligand>
</feature>
<feature type="binding site" evidence="1">
    <location>
        <position position="113"/>
    </location>
    <ligand>
        <name>5-amino-6-(D-ribitylamino)uracil</name>
        <dbReference type="ChEBI" id="CHEBI:15934"/>
    </ligand>
</feature>
<feature type="binding site" evidence="1">
    <location>
        <position position="127"/>
    </location>
    <ligand>
        <name>(2S)-2-hydroxy-3-oxobutyl phosphate</name>
        <dbReference type="ChEBI" id="CHEBI:58830"/>
    </ligand>
</feature>
<keyword id="KW-0686">Riboflavin biosynthesis</keyword>
<keyword id="KW-0808">Transferase</keyword>
<accession>B3H0P9</accession>
<sequence>MAKITGNLVATGLKFGIVTARFNDFINDKLLSGAIDTLVRHGADENNIDTAWVPGAFEIPLVAKKMATSGKYDAVICLGTVIRGSTTHYDYVCNEAAKGIGAVALETGVPVIFGVLTTENIEQAIERAGTKAGNKGSECALGAIEMVNVLKAI</sequence>
<gene>
    <name evidence="1" type="primary">ribH</name>
    <name type="ordered locus">APP7_0409</name>
</gene>
<proteinExistence type="inferred from homology"/>
<name>RISB_ACTP7</name>
<protein>
    <recommendedName>
        <fullName evidence="1">6,7-dimethyl-8-ribityllumazine synthase</fullName>
        <shortName evidence="1">DMRL synthase</shortName>
        <shortName evidence="1">LS</shortName>
        <shortName evidence="1">Lumazine synthase</shortName>
        <ecNumber evidence="1">2.5.1.78</ecNumber>
    </recommendedName>
</protein>
<evidence type="ECO:0000255" key="1">
    <source>
        <dbReference type="HAMAP-Rule" id="MF_00178"/>
    </source>
</evidence>
<comment type="function">
    <text evidence="1">Catalyzes the formation of 6,7-dimethyl-8-ribityllumazine by condensation of 5-amino-6-(D-ribitylamino)uracil with 3,4-dihydroxy-2-butanone 4-phosphate. This is the penultimate step in the biosynthesis of riboflavin.</text>
</comment>
<comment type="catalytic activity">
    <reaction evidence="1">
        <text>(2S)-2-hydroxy-3-oxobutyl phosphate + 5-amino-6-(D-ribitylamino)uracil = 6,7-dimethyl-8-(1-D-ribityl)lumazine + phosphate + 2 H2O + H(+)</text>
        <dbReference type="Rhea" id="RHEA:26152"/>
        <dbReference type="ChEBI" id="CHEBI:15377"/>
        <dbReference type="ChEBI" id="CHEBI:15378"/>
        <dbReference type="ChEBI" id="CHEBI:15934"/>
        <dbReference type="ChEBI" id="CHEBI:43474"/>
        <dbReference type="ChEBI" id="CHEBI:58201"/>
        <dbReference type="ChEBI" id="CHEBI:58830"/>
        <dbReference type="EC" id="2.5.1.78"/>
    </reaction>
</comment>
<comment type="pathway">
    <text evidence="1">Cofactor biosynthesis; riboflavin biosynthesis; riboflavin from 2-hydroxy-3-oxobutyl phosphate and 5-amino-6-(D-ribitylamino)uracil: step 1/2.</text>
</comment>
<comment type="subunit">
    <text evidence="1">Forms an icosahedral capsid composed of 60 subunits, arranged as a dodecamer of pentamers.</text>
</comment>
<comment type="similarity">
    <text evidence="1">Belongs to the DMRL synthase family.</text>
</comment>
<dbReference type="EC" id="2.5.1.78" evidence="1"/>
<dbReference type="EMBL" id="CP001091">
    <property type="protein sequence ID" value="ACE61061.1"/>
    <property type="molecule type" value="Genomic_DNA"/>
</dbReference>
<dbReference type="SMR" id="B3H0P9"/>
<dbReference type="KEGG" id="apa:APP7_0409"/>
<dbReference type="HOGENOM" id="CLU_089358_1_1_6"/>
<dbReference type="UniPathway" id="UPA00275">
    <property type="reaction ID" value="UER00404"/>
</dbReference>
<dbReference type="Proteomes" id="UP000001226">
    <property type="component" value="Chromosome"/>
</dbReference>
<dbReference type="GO" id="GO:0005829">
    <property type="term" value="C:cytosol"/>
    <property type="evidence" value="ECO:0007669"/>
    <property type="project" value="TreeGrafter"/>
</dbReference>
<dbReference type="GO" id="GO:0009349">
    <property type="term" value="C:riboflavin synthase complex"/>
    <property type="evidence" value="ECO:0007669"/>
    <property type="project" value="InterPro"/>
</dbReference>
<dbReference type="GO" id="GO:0000906">
    <property type="term" value="F:6,7-dimethyl-8-ribityllumazine synthase activity"/>
    <property type="evidence" value="ECO:0007669"/>
    <property type="project" value="UniProtKB-UniRule"/>
</dbReference>
<dbReference type="GO" id="GO:0009231">
    <property type="term" value="P:riboflavin biosynthetic process"/>
    <property type="evidence" value="ECO:0007669"/>
    <property type="project" value="UniProtKB-UniRule"/>
</dbReference>
<dbReference type="CDD" id="cd09209">
    <property type="entry name" value="Lumazine_synthase-I"/>
    <property type="match status" value="1"/>
</dbReference>
<dbReference type="FunFam" id="3.40.50.960:FF:000001">
    <property type="entry name" value="6,7-dimethyl-8-ribityllumazine synthase"/>
    <property type="match status" value="1"/>
</dbReference>
<dbReference type="Gene3D" id="3.40.50.960">
    <property type="entry name" value="Lumazine/riboflavin synthase"/>
    <property type="match status" value="1"/>
</dbReference>
<dbReference type="HAMAP" id="MF_00178">
    <property type="entry name" value="Lumazine_synth"/>
    <property type="match status" value="1"/>
</dbReference>
<dbReference type="InterPro" id="IPR034964">
    <property type="entry name" value="LS"/>
</dbReference>
<dbReference type="InterPro" id="IPR002180">
    <property type="entry name" value="LS/RS"/>
</dbReference>
<dbReference type="InterPro" id="IPR036467">
    <property type="entry name" value="LS/RS_sf"/>
</dbReference>
<dbReference type="NCBIfam" id="TIGR00114">
    <property type="entry name" value="lumazine-synth"/>
    <property type="match status" value="1"/>
</dbReference>
<dbReference type="NCBIfam" id="NF000812">
    <property type="entry name" value="PRK00061.1-4"/>
    <property type="match status" value="1"/>
</dbReference>
<dbReference type="PANTHER" id="PTHR21058:SF0">
    <property type="entry name" value="6,7-DIMETHYL-8-RIBITYLLUMAZINE SYNTHASE"/>
    <property type="match status" value="1"/>
</dbReference>
<dbReference type="PANTHER" id="PTHR21058">
    <property type="entry name" value="6,7-DIMETHYL-8-RIBITYLLUMAZINE SYNTHASE DMRL SYNTHASE LUMAZINE SYNTHASE"/>
    <property type="match status" value="1"/>
</dbReference>
<dbReference type="Pfam" id="PF00885">
    <property type="entry name" value="DMRL_synthase"/>
    <property type="match status" value="1"/>
</dbReference>
<dbReference type="SUPFAM" id="SSF52121">
    <property type="entry name" value="Lumazine synthase"/>
    <property type="match status" value="1"/>
</dbReference>
<organism>
    <name type="scientific">Actinobacillus pleuropneumoniae serotype 7 (strain AP76)</name>
    <dbReference type="NCBI Taxonomy" id="537457"/>
    <lineage>
        <taxon>Bacteria</taxon>
        <taxon>Pseudomonadati</taxon>
        <taxon>Pseudomonadota</taxon>
        <taxon>Gammaproteobacteria</taxon>
        <taxon>Pasteurellales</taxon>
        <taxon>Pasteurellaceae</taxon>
        <taxon>Actinobacillus</taxon>
    </lineage>
</organism>